<sequence length="243" mass="26210">MAASSISSPWGKHVFKAILMVLVALILLHSALAQSRRDFAPPGQQKREAPVDVLTQIGRSVRGTLDAWIGPETMHLVSESSSQVLWAISSAISVAFFALSGIAAQLLNALGLAGDYLAQGLKLSPGQVQTFLLWGAGALVVYWLLSLLLGLVLALLGRILWGLKLVIFLAGFVALMRSVPDPSTRALLLLALLILYALLSRLTGSRASGAQLEAKVRGLERQVEELRWRQRRAAKGARSVEEE</sequence>
<gene>
    <name evidence="5" type="primary">TMEM109</name>
</gene>
<accession>Q9BVC6</accession>
<protein>
    <recommendedName>
        <fullName evidence="1">Voltage-gated monoatomic cation channel TMEM109</fullName>
    </recommendedName>
    <alternativeName>
        <fullName evidence="4">Mitsugumin-23</fullName>
        <shortName evidence="4">Mg23</shortName>
    </alternativeName>
    <alternativeName>
        <fullName evidence="5">Transmembrane protein 109</fullName>
    </alternativeName>
</protein>
<dbReference type="EMBL" id="BC001309">
    <property type="protein sequence ID" value="AAH01309.1"/>
    <property type="molecule type" value="mRNA"/>
</dbReference>
<dbReference type="CCDS" id="CCDS7996.1"/>
<dbReference type="RefSeq" id="NP_076997.1">
    <property type="nucleotide sequence ID" value="NM_024092.3"/>
</dbReference>
<dbReference type="SMR" id="Q9BVC6"/>
<dbReference type="BioGRID" id="122524">
    <property type="interactions" value="136"/>
</dbReference>
<dbReference type="FunCoup" id="Q9BVC6">
    <property type="interactions" value="631"/>
</dbReference>
<dbReference type="IntAct" id="Q9BVC6">
    <property type="interactions" value="60"/>
</dbReference>
<dbReference type="MINT" id="Q9BVC6"/>
<dbReference type="STRING" id="9606.ENSP00000227525"/>
<dbReference type="TCDB" id="1.A.74.1.2">
    <property type="family name" value="the mitsugumin 23 (mg23) family"/>
</dbReference>
<dbReference type="GlyGen" id="Q9BVC6">
    <property type="glycosylation" value="1 site, 1 O-linked glycan (1 site)"/>
</dbReference>
<dbReference type="iPTMnet" id="Q9BVC6"/>
<dbReference type="PhosphoSitePlus" id="Q9BVC6"/>
<dbReference type="SwissPalm" id="Q9BVC6"/>
<dbReference type="BioMuta" id="TMEM109"/>
<dbReference type="DMDM" id="74733312"/>
<dbReference type="jPOST" id="Q9BVC6"/>
<dbReference type="MassIVE" id="Q9BVC6"/>
<dbReference type="PaxDb" id="9606-ENSP00000227525"/>
<dbReference type="PeptideAtlas" id="Q9BVC6"/>
<dbReference type="ProteomicsDB" id="79198"/>
<dbReference type="Pumba" id="Q9BVC6"/>
<dbReference type="TopDownProteomics" id="Q9BVC6"/>
<dbReference type="Antibodypedia" id="2041">
    <property type="antibodies" value="70 antibodies from 16 providers"/>
</dbReference>
<dbReference type="DNASU" id="79073"/>
<dbReference type="Ensembl" id="ENST00000227525.8">
    <property type="protein sequence ID" value="ENSP00000227525.3"/>
    <property type="gene ID" value="ENSG00000110108.11"/>
</dbReference>
<dbReference type="Ensembl" id="ENST00000536171.1">
    <property type="protein sequence ID" value="ENSP00000443990.1"/>
    <property type="gene ID" value="ENSG00000110108.11"/>
</dbReference>
<dbReference type="Ensembl" id="ENST00000715796.1">
    <property type="protein sequence ID" value="ENSP00000520520.1"/>
    <property type="gene ID" value="ENSG00000110108.11"/>
</dbReference>
<dbReference type="GeneID" id="79073"/>
<dbReference type="KEGG" id="hsa:79073"/>
<dbReference type="MANE-Select" id="ENST00000227525.8">
    <property type="protein sequence ID" value="ENSP00000227525.3"/>
    <property type="RefSeq nucleotide sequence ID" value="NM_024092.3"/>
    <property type="RefSeq protein sequence ID" value="NP_076997.1"/>
</dbReference>
<dbReference type="UCSC" id="uc001nqg.4">
    <property type="organism name" value="human"/>
</dbReference>
<dbReference type="AGR" id="HGNC:28771"/>
<dbReference type="CTD" id="79073"/>
<dbReference type="DisGeNET" id="79073"/>
<dbReference type="GeneCards" id="TMEM109"/>
<dbReference type="HGNC" id="HGNC:28771">
    <property type="gene designation" value="TMEM109"/>
</dbReference>
<dbReference type="HPA" id="ENSG00000110108">
    <property type="expression patterns" value="Low tissue specificity"/>
</dbReference>
<dbReference type="MIM" id="619168">
    <property type="type" value="gene"/>
</dbReference>
<dbReference type="neXtProt" id="NX_Q9BVC6"/>
<dbReference type="OpenTargets" id="ENSG00000110108"/>
<dbReference type="PharmGKB" id="PA142670760"/>
<dbReference type="VEuPathDB" id="HostDB:ENSG00000110108"/>
<dbReference type="eggNOG" id="ENOG502S0EJ">
    <property type="taxonomic scope" value="Eukaryota"/>
</dbReference>
<dbReference type="GeneTree" id="ENSGT00390000015704"/>
<dbReference type="HOGENOM" id="CLU_099892_0_0_1"/>
<dbReference type="InParanoid" id="Q9BVC6"/>
<dbReference type="OMA" id="VFKVILM"/>
<dbReference type="OrthoDB" id="9902161at2759"/>
<dbReference type="PAN-GO" id="Q9BVC6">
    <property type="GO annotations" value="3 GO annotations based on evolutionary models"/>
</dbReference>
<dbReference type="PhylomeDB" id="Q9BVC6"/>
<dbReference type="TreeFam" id="TF332238"/>
<dbReference type="PathwayCommons" id="Q9BVC6"/>
<dbReference type="SignaLink" id="Q9BVC6"/>
<dbReference type="BioGRID-ORCS" id="79073">
    <property type="hits" value="14 hits in 1167 CRISPR screens"/>
</dbReference>
<dbReference type="ChiTaRS" id="TMEM109">
    <property type="organism name" value="human"/>
</dbReference>
<dbReference type="GenomeRNAi" id="79073"/>
<dbReference type="Pharos" id="Q9BVC6">
    <property type="development level" value="Tbio"/>
</dbReference>
<dbReference type="PRO" id="PR:Q9BVC6"/>
<dbReference type="Proteomes" id="UP000005640">
    <property type="component" value="Chromosome 11"/>
</dbReference>
<dbReference type="RNAct" id="Q9BVC6">
    <property type="molecule type" value="protein"/>
</dbReference>
<dbReference type="Bgee" id="ENSG00000110108">
    <property type="expression patterns" value="Expressed in thoracic aorta and 205 other cell types or tissues"/>
</dbReference>
<dbReference type="GO" id="GO:0070062">
    <property type="term" value="C:extracellular exosome"/>
    <property type="evidence" value="ECO:0007005"/>
    <property type="project" value="UniProtKB"/>
</dbReference>
<dbReference type="GO" id="GO:0034702">
    <property type="term" value="C:monoatomic ion channel complex"/>
    <property type="evidence" value="ECO:0007669"/>
    <property type="project" value="UniProtKB-KW"/>
</dbReference>
<dbReference type="GO" id="GO:0005640">
    <property type="term" value="C:nuclear outer membrane"/>
    <property type="evidence" value="ECO:0007669"/>
    <property type="project" value="UniProtKB-SubCell"/>
</dbReference>
<dbReference type="GO" id="GO:0033017">
    <property type="term" value="C:sarcoplasmic reticulum membrane"/>
    <property type="evidence" value="ECO:0000250"/>
    <property type="project" value="UniProtKB"/>
</dbReference>
<dbReference type="GO" id="GO:0022843">
    <property type="term" value="F:voltage-gated monoatomic cation channel activity"/>
    <property type="evidence" value="ECO:0000250"/>
    <property type="project" value="UniProtKB"/>
</dbReference>
<dbReference type="GO" id="GO:0071480">
    <property type="term" value="P:cellular response to gamma radiation"/>
    <property type="evidence" value="ECO:0000315"/>
    <property type="project" value="MGI"/>
</dbReference>
<dbReference type="GO" id="GO:0042771">
    <property type="term" value="P:intrinsic apoptotic signaling pathway in response to DNA damage by p53 class mediator"/>
    <property type="evidence" value="ECO:0000318"/>
    <property type="project" value="GO_Central"/>
</dbReference>
<dbReference type="GO" id="GO:0043069">
    <property type="term" value="P:negative regulation of programmed cell death"/>
    <property type="evidence" value="ECO:0000315"/>
    <property type="project" value="MGI"/>
</dbReference>
<dbReference type="InterPro" id="IPR039492">
    <property type="entry name" value="TMEM109"/>
</dbReference>
<dbReference type="PANTHER" id="PTHR14550">
    <property type="entry name" value="TRANSMEMBRANE PROTEIN 109"/>
    <property type="match status" value="1"/>
</dbReference>
<dbReference type="PANTHER" id="PTHR14550:SF2">
    <property type="entry name" value="TRANSMEMBRANE PROTEIN 109"/>
    <property type="match status" value="1"/>
</dbReference>
<dbReference type="Pfam" id="PF14965">
    <property type="entry name" value="BRI3BP"/>
    <property type="match status" value="1"/>
</dbReference>
<reference key="1">
    <citation type="journal article" date="2004" name="Genome Res.">
        <title>The status, quality, and expansion of the NIH full-length cDNA project: the Mammalian Gene Collection (MGC).</title>
        <authorList>
            <consortium name="The MGC Project Team"/>
        </authorList>
    </citation>
    <scope>NUCLEOTIDE SEQUENCE [LARGE SCALE MRNA]</scope>
    <source>
        <tissue>Placenta</tissue>
    </source>
</reference>
<reference key="2">
    <citation type="submission" date="2005-11" db="UniProtKB">
        <authorList>
            <person name="Bienvenut W.V."/>
            <person name="Claeys D."/>
        </authorList>
    </citation>
    <scope>PROTEIN SEQUENCE OF 48-59 AND 207-215</scope>
    <scope>IDENTIFICATION BY MASS SPECTROMETRY</scope>
    <source>
        <tissue>Platelet</tissue>
    </source>
</reference>
<reference key="3">
    <citation type="journal article" date="2011" name="BMC Syst. Biol.">
        <title>Initial characterization of the human central proteome.</title>
        <authorList>
            <person name="Burkard T.R."/>
            <person name="Planyavsky M."/>
            <person name="Kaupe I."/>
            <person name="Breitwieser F.P."/>
            <person name="Buerckstuemmer T."/>
            <person name="Bennett K.L."/>
            <person name="Superti-Furga G."/>
            <person name="Colinge J."/>
        </authorList>
    </citation>
    <scope>IDENTIFICATION BY MASS SPECTROMETRY [LARGE SCALE ANALYSIS]</scope>
</reference>
<reference key="4">
    <citation type="journal article" date="2013" name="FEBS Lett.">
        <title>Protective role of the endoplasmic reticulum protein mitsugumin23 against ultraviolet C-induced cell death.</title>
        <authorList>
            <person name="Yamashita A."/>
            <person name="Taniwaki T."/>
            <person name="Kaikoi Y."/>
            <person name="Yamazaki T."/>
        </authorList>
    </citation>
    <scope>FUNCTION</scope>
    <scope>INTERACTION WITH CRYAB</scope>
</reference>
<reference key="5">
    <citation type="journal article" date="2015" name="Proteomics">
        <title>N-terminome analysis of the human mitochondrial proteome.</title>
        <authorList>
            <person name="Vaca Jacome A.S."/>
            <person name="Rabilloud T."/>
            <person name="Schaeffer-Reiss C."/>
            <person name="Rompais M."/>
            <person name="Ayoub D."/>
            <person name="Lane L."/>
            <person name="Bairoch A."/>
            <person name="Van Dorsselaer A."/>
            <person name="Carapito C."/>
        </authorList>
    </citation>
    <scope>IDENTIFICATION BY MASS SPECTROMETRY [LARGE SCALE ANALYSIS]</scope>
</reference>
<name>TM109_HUMAN</name>
<comment type="function">
    <text evidence="1 3">Functions as a voltage-gated monoatomic cation channel permeable to both potassium and calcium (By similarity). Plays a role in the cellular response to DNA damage (PubMed:23542032).</text>
</comment>
<comment type="catalytic activity">
    <reaction evidence="1">
        <text>K(+)(in) = K(+)(out)</text>
        <dbReference type="Rhea" id="RHEA:29463"/>
        <dbReference type="ChEBI" id="CHEBI:29103"/>
    </reaction>
</comment>
<comment type="catalytic activity">
    <reaction evidence="1">
        <text>Ca(2+)(in) = Ca(2+)(out)</text>
        <dbReference type="Rhea" id="RHEA:29671"/>
        <dbReference type="ChEBI" id="CHEBI:29108"/>
    </reaction>
</comment>
<comment type="subunit">
    <text evidence="1 3">Homooligomer (By similarity). Interacts with CRYAB; in the cellular response to DNA damage (PubMed:23542032).</text>
</comment>
<comment type="interaction">
    <interactant intactId="EBI-1057733">
        <id>Q9BVC6</id>
    </interactant>
    <interactant intactId="EBI-12701138">
        <id>P41181</id>
        <label>AQP2</label>
    </interactant>
    <organismsDiffer>false</organismsDiffer>
    <experiments>3</experiments>
</comment>
<comment type="interaction">
    <interactant intactId="EBI-1057733">
        <id>Q9BVC6</id>
    </interactant>
    <interactant intactId="EBI-17444777">
        <id>O43315</id>
        <label>AQP9</label>
    </interactant>
    <organismsDiffer>false</organismsDiffer>
    <experiments>3</experiments>
</comment>
<comment type="interaction">
    <interactant intactId="EBI-1057733">
        <id>Q9BVC6</id>
    </interactant>
    <interactant intactId="EBI-781551">
        <id>Q9Y282</id>
        <label>ERGIC3</label>
    </interactant>
    <organismsDiffer>false</organismsDiffer>
    <experiments>3</experiments>
</comment>
<comment type="interaction">
    <interactant intactId="EBI-1057733">
        <id>Q9BVC6</id>
    </interactant>
    <interactant intactId="EBI-712073">
        <id>Q8NBJ4</id>
        <label>GOLM1</label>
    </interactant>
    <organismsDiffer>false</organismsDiffer>
    <experiments>3</experiments>
</comment>
<comment type="interaction">
    <interactant intactId="EBI-1057733">
        <id>Q9BVC6</id>
    </interactant>
    <interactant intactId="EBI-11721746">
        <id>Q8TED1</id>
        <label>GPX8</label>
    </interactant>
    <organismsDiffer>false</organismsDiffer>
    <experiments>3</experiments>
</comment>
<comment type="interaction">
    <interactant intactId="EBI-1057733">
        <id>Q9BVC6</id>
    </interactant>
    <interactant intactId="EBI-724754">
        <id>O14880</id>
        <label>MGST3</label>
    </interactant>
    <organismsDiffer>false</organismsDiffer>
    <experiments>3</experiments>
</comment>
<comment type="interaction">
    <interactant intactId="EBI-1057733">
        <id>Q9BVC6</id>
    </interactant>
    <interactant intactId="EBI-3923617">
        <id>Q9H2K0</id>
        <label>MTIF3</label>
    </interactant>
    <organismsDiffer>false</organismsDiffer>
    <experiments>3</experiments>
</comment>
<comment type="interaction">
    <interactant intactId="EBI-1057733">
        <id>Q9BVC6</id>
    </interactant>
    <interactant intactId="EBI-716063">
        <id>Q13113</id>
        <label>PDZK1IP1</label>
    </interactant>
    <organismsDiffer>false</organismsDiffer>
    <experiments>3</experiments>
</comment>
<comment type="interaction">
    <interactant intactId="EBI-1057733">
        <id>Q9BVC6</id>
    </interactant>
    <interactant intactId="EBI-12055631">
        <id>Q96K19-5</id>
        <label>RNF170</label>
    </interactant>
    <organismsDiffer>false</organismsDiffer>
    <experiments>3</experiments>
</comment>
<comment type="interaction">
    <interactant intactId="EBI-1057733">
        <id>Q9BVC6</id>
    </interactant>
    <interactant intactId="EBI-3920694">
        <id>Q9NR31</id>
        <label>SAR1A</label>
    </interactant>
    <organismsDiffer>false</organismsDiffer>
    <experiments>3</experiments>
</comment>
<comment type="interaction">
    <interactant intactId="EBI-1057733">
        <id>Q9BVC6</id>
    </interactant>
    <interactant intactId="EBI-18036244">
        <id>Q05940</id>
        <label>SLC18A2</label>
    </interactant>
    <organismsDiffer>false</organismsDiffer>
    <experiments>3</experiments>
</comment>
<comment type="interaction">
    <interactant intactId="EBI-1057733">
        <id>Q9BVC6</id>
    </interactant>
    <interactant intactId="EBI-12078338">
        <id>O43278-2</id>
        <label>SPINT1</label>
    </interactant>
    <organismsDiffer>false</organismsDiffer>
    <experiments>3</experiments>
</comment>
<comment type="interaction">
    <interactant intactId="EBI-1057733">
        <id>Q9BVC6</id>
    </interactant>
    <interactant intactId="EBI-1211440">
        <id>P27105</id>
        <label>STOM</label>
    </interactant>
    <organismsDiffer>false</organismsDiffer>
    <experiments>3</experiments>
</comment>
<comment type="interaction">
    <interactant intactId="EBI-1057733">
        <id>Q9BVC6</id>
    </interactant>
    <interactant intactId="EBI-18178701">
        <id>Q4KMG9</id>
        <label>TMEM52B</label>
    </interactant>
    <organismsDiffer>false</organismsDiffer>
    <experiments>3</experiments>
</comment>
<comment type="interaction">
    <interactant intactId="EBI-1057733">
        <id>Q9BVC6</id>
    </interactant>
    <interactant intactId="EBI-11742770">
        <id>Q96HE8</id>
        <label>TMEM80</label>
    </interactant>
    <organismsDiffer>false</organismsDiffer>
    <experiments>3</experiments>
</comment>
<comment type="subcellular location">
    <subcellularLocation>
        <location evidence="1">Nucleus outer membrane</location>
        <topology evidence="1">Multi-pass membrane protein</topology>
    </subcellularLocation>
    <subcellularLocation>
        <location evidence="1">Endoplasmic reticulum membrane</location>
        <topology evidence="1">Multi-pass membrane protein</topology>
    </subcellularLocation>
    <subcellularLocation>
        <location evidence="1">Sarcoplasmic reticulum membrane</location>
        <topology evidence="1">Multi-pass membrane protein</topology>
    </subcellularLocation>
</comment>
<organism>
    <name type="scientific">Homo sapiens</name>
    <name type="common">Human</name>
    <dbReference type="NCBI Taxonomy" id="9606"/>
    <lineage>
        <taxon>Eukaryota</taxon>
        <taxon>Metazoa</taxon>
        <taxon>Chordata</taxon>
        <taxon>Craniata</taxon>
        <taxon>Vertebrata</taxon>
        <taxon>Euteleostomi</taxon>
        <taxon>Mammalia</taxon>
        <taxon>Eutheria</taxon>
        <taxon>Euarchontoglires</taxon>
        <taxon>Primates</taxon>
        <taxon>Haplorrhini</taxon>
        <taxon>Catarrhini</taxon>
        <taxon>Hominidae</taxon>
        <taxon>Homo</taxon>
    </lineage>
</organism>
<feature type="signal peptide" evidence="2">
    <location>
        <begin position="1"/>
        <end position="33"/>
    </location>
</feature>
<feature type="chain" id="PRO_0000044618" description="Voltage-gated monoatomic cation channel TMEM109">
    <location>
        <begin position="34"/>
        <end position="243"/>
    </location>
</feature>
<feature type="topological domain" description="Lumenal" evidence="1">
    <location>
        <begin position="34"/>
        <end position="83"/>
    </location>
</feature>
<feature type="transmembrane region" description="Helical" evidence="2">
    <location>
        <begin position="84"/>
        <end position="104"/>
    </location>
</feature>
<feature type="topological domain" description="Cytoplasmic" evidence="1">
    <location>
        <begin position="105"/>
        <end position="135"/>
    </location>
</feature>
<feature type="transmembrane region" description="Helical" evidence="2">
    <location>
        <begin position="136"/>
        <end position="156"/>
    </location>
</feature>
<feature type="topological domain" description="Lumenal" evidence="1">
    <location>
        <begin position="157"/>
        <end position="185"/>
    </location>
</feature>
<feature type="transmembrane region" description="Helical" evidence="2">
    <location>
        <begin position="186"/>
        <end position="205"/>
    </location>
</feature>
<feature type="topological domain" description="Cytoplasmic" evidence="1">
    <location>
        <begin position="206"/>
        <end position="243"/>
    </location>
</feature>
<evidence type="ECO:0000250" key="1">
    <source>
        <dbReference type="UniProtKB" id="O77751"/>
    </source>
</evidence>
<evidence type="ECO:0000255" key="2"/>
<evidence type="ECO:0000269" key="3">
    <source>
    </source>
</evidence>
<evidence type="ECO:0000303" key="4">
    <source>
    </source>
</evidence>
<evidence type="ECO:0000312" key="5">
    <source>
        <dbReference type="HGNC" id="HGNC:28771"/>
    </source>
</evidence>
<proteinExistence type="evidence at protein level"/>
<keyword id="KW-0903">Direct protein sequencing</keyword>
<keyword id="KW-0256">Endoplasmic reticulum</keyword>
<keyword id="KW-0407">Ion channel</keyword>
<keyword id="KW-0406">Ion transport</keyword>
<keyword id="KW-0472">Membrane</keyword>
<keyword id="KW-0539">Nucleus</keyword>
<keyword id="KW-1267">Proteomics identification</keyword>
<keyword id="KW-1185">Reference proteome</keyword>
<keyword id="KW-0703">Sarcoplasmic reticulum</keyword>
<keyword id="KW-0732">Signal</keyword>
<keyword id="KW-0812">Transmembrane</keyword>
<keyword id="KW-1133">Transmembrane helix</keyword>
<keyword id="KW-0813">Transport</keyword>
<keyword id="KW-0851">Voltage-gated channel</keyword>